<dbReference type="EC" id="1.13.11.66" evidence="2"/>
<dbReference type="EMBL" id="AB021867">
    <property type="protein sequence ID" value="BAA76672.1"/>
    <property type="molecule type" value="Genomic_DNA"/>
</dbReference>
<dbReference type="EMBL" id="AP010805">
    <property type="protein sequence ID" value="BAI99095.1"/>
    <property type="molecule type" value="Genomic_DNA"/>
</dbReference>
<dbReference type="RefSeq" id="WP_007686007.1">
    <property type="nucleotide sequence ID" value="NC_014007.1"/>
</dbReference>
<dbReference type="SMR" id="Q9WXE6"/>
<dbReference type="GeneID" id="29275703"/>
<dbReference type="KEGG" id="sjp:SJA_P1-01430"/>
<dbReference type="HOGENOM" id="CLU_057821_0_0_5"/>
<dbReference type="BioCyc" id="MetaCyc:LINEPSEPA-MONOMER"/>
<dbReference type="BRENDA" id="1.13.11.66">
    <property type="organism ID" value="2280"/>
</dbReference>
<dbReference type="UniPathway" id="UPA00689"/>
<dbReference type="Proteomes" id="UP000007753">
    <property type="component" value="Plasmid pCHQ1"/>
</dbReference>
<dbReference type="GO" id="GO:0051213">
    <property type="term" value="F:dioxygenase activity"/>
    <property type="evidence" value="ECO:0007669"/>
    <property type="project" value="UniProtKB-KW"/>
</dbReference>
<dbReference type="GO" id="GO:0046872">
    <property type="term" value="F:metal ion binding"/>
    <property type="evidence" value="ECO:0007669"/>
    <property type="project" value="UniProtKB-KW"/>
</dbReference>
<dbReference type="GO" id="GO:0009056">
    <property type="term" value="P:catabolic process"/>
    <property type="evidence" value="ECO:0007669"/>
    <property type="project" value="UniProtKB-KW"/>
</dbReference>
<dbReference type="GO" id="GO:0009636">
    <property type="term" value="P:response to toxic substance"/>
    <property type="evidence" value="ECO:0007669"/>
    <property type="project" value="UniProtKB-KW"/>
</dbReference>
<dbReference type="CDD" id="cd08347">
    <property type="entry name" value="PcpA_C_like"/>
    <property type="match status" value="1"/>
</dbReference>
<dbReference type="CDD" id="cd08346">
    <property type="entry name" value="PcpA_N_like"/>
    <property type="match status" value="1"/>
</dbReference>
<dbReference type="Gene3D" id="3.10.180.10">
    <property type="entry name" value="2,3-Dihydroxybiphenyl 1,2-Dioxygenase, domain 1"/>
    <property type="match status" value="2"/>
</dbReference>
<dbReference type="InterPro" id="IPR052537">
    <property type="entry name" value="Extradiol_RC_dioxygenase"/>
</dbReference>
<dbReference type="InterPro" id="IPR029068">
    <property type="entry name" value="Glyas_Bleomycin-R_OHBP_Dase"/>
</dbReference>
<dbReference type="InterPro" id="IPR037523">
    <property type="entry name" value="VOC"/>
</dbReference>
<dbReference type="PANTHER" id="PTHR36110">
    <property type="entry name" value="RING-CLEAVING DIOXYGENASE MHQE-RELATED"/>
    <property type="match status" value="1"/>
</dbReference>
<dbReference type="PANTHER" id="PTHR36110:SF2">
    <property type="entry name" value="RING-CLEAVING DIOXYGENASE MHQE-RELATED"/>
    <property type="match status" value="1"/>
</dbReference>
<dbReference type="SUPFAM" id="SSF54593">
    <property type="entry name" value="Glyoxalase/Bleomycin resistance protein/Dihydroxybiphenyl dioxygenase"/>
    <property type="match status" value="1"/>
</dbReference>
<dbReference type="PROSITE" id="PS51819">
    <property type="entry name" value="VOC"/>
    <property type="match status" value="2"/>
</dbReference>
<proteinExistence type="evidence at protein level"/>
<keyword id="KW-0058">Aromatic hydrocarbons catabolism</keyword>
<keyword id="KW-0216">Detoxification</keyword>
<keyword id="KW-0223">Dioxygenase</keyword>
<keyword id="KW-0408">Iron</keyword>
<keyword id="KW-0479">Metal-binding</keyword>
<keyword id="KW-0560">Oxidoreductase</keyword>
<keyword id="KW-0614">Plasmid</keyword>
<keyword id="KW-1185">Reference proteome</keyword>
<keyword id="KW-0677">Repeat</keyword>
<geneLocation type="plasmid" evidence="6 7">
    <name>pCHQ1</name>
</geneLocation>
<feature type="chain" id="PRO_0000085042" description="Chlorohydroquinone/hydroquinone 1,2-dioxygenase">
    <location>
        <begin position="1"/>
        <end position="321"/>
    </location>
</feature>
<feature type="domain" description="VOC 1" evidence="1">
    <location>
        <begin position="10"/>
        <end position="138"/>
    </location>
</feature>
<feature type="domain" description="VOC 2" evidence="1">
    <location>
        <begin position="160"/>
        <end position="282"/>
    </location>
</feature>
<feature type="binding site" evidence="5">
    <location>
        <position position="162"/>
    </location>
    <ligand>
        <name>Fe cation</name>
        <dbReference type="ChEBI" id="CHEBI:24875"/>
    </ligand>
</feature>
<feature type="binding site" evidence="5">
    <location>
        <position position="229"/>
    </location>
    <ligand>
        <name>Fe cation</name>
        <dbReference type="ChEBI" id="CHEBI:24875"/>
    </ligand>
</feature>
<feature type="binding site" evidence="5">
    <location>
        <position position="278"/>
    </location>
    <ligand>
        <name>Fe cation</name>
        <dbReference type="ChEBI" id="CHEBI:24875"/>
    </ligand>
</feature>
<feature type="mutagenesis site" description="Loss of catalytic activity." evidence="2">
    <original>H</original>
    <variation>A</variation>
    <location>
        <position position="162"/>
    </location>
</feature>
<feature type="mutagenesis site" description="Loss of catalytic activity." evidence="2">
    <original>H</original>
    <variation>A</variation>
    <location>
        <position position="229"/>
    </location>
</feature>
<feature type="mutagenesis site" description="Loss of catalytic activity." evidence="2">
    <original>E</original>
    <variation>A</variation>
    <location>
        <position position="278"/>
    </location>
</feature>
<accession>Q9WXE6</accession>
<accession>D4Z913</accession>
<name>LINE_SPHIU</name>
<organism>
    <name type="scientific">Sphingobium indicum (strain DSM 16413 / CCM 7287 / MTCC 6362 / UT26 / NBRC 101211 / UT26S)</name>
    <name type="common">Sphingobium japonicum</name>
    <dbReference type="NCBI Taxonomy" id="452662"/>
    <lineage>
        <taxon>Bacteria</taxon>
        <taxon>Pseudomonadati</taxon>
        <taxon>Pseudomonadota</taxon>
        <taxon>Alphaproteobacteria</taxon>
        <taxon>Sphingomonadales</taxon>
        <taxon>Sphingomonadaceae</taxon>
        <taxon>Sphingobium</taxon>
    </lineage>
</organism>
<comment type="function">
    <text evidence="2">Cleaves aromatic rings with two hydroxyl groups at para positions with consumption of O(2). Catalyzes the cleavage of chlorohydroquinone (CHQ), as part of the gamma-hexachlorocyclohexane (gamma-HCH or lindane) degradation pathway, producing 5-chlorocarbonyl-4-hydroxy-penta-2,4-dienoate as an intermediate product that can react with water yielding maleylacetate. This degradation pathway allows S.japonicum UT26 to grow on gamma-HCH as the sole source of carbon and energy. Can also use hydroquinone (HQ) as substrate, leading to gamma-hydroxymuconic semialdehyde. Is not able to convert catechol, contrary to meta-cleavage dioxygenases.</text>
</comment>
<comment type="catalytic activity">
    <reaction evidence="2">
        <text>hydroquinone + O2 = (2E,4Z)-4-hydroxy-6-oxohexa-2,4-dienoate + H(+)</text>
        <dbReference type="Rhea" id="RHEA:34163"/>
        <dbReference type="ChEBI" id="CHEBI:15378"/>
        <dbReference type="ChEBI" id="CHEBI:15379"/>
        <dbReference type="ChEBI" id="CHEBI:17594"/>
        <dbReference type="ChEBI" id="CHEBI:66947"/>
        <dbReference type="EC" id="1.13.11.66"/>
    </reaction>
</comment>
<comment type="catalytic activity">
    <reaction evidence="2">
        <text>chlorohydroquinone + O2 = 5-chlorocarbonyl-4-hydroxy-penta-2,4-dienoate + H(+)</text>
        <dbReference type="Rhea" id="RHEA:16761"/>
        <dbReference type="ChEBI" id="CHEBI:15378"/>
        <dbReference type="ChEBI" id="CHEBI:15379"/>
        <dbReference type="ChEBI" id="CHEBI:27675"/>
        <dbReference type="ChEBI" id="CHEBI:140625"/>
    </reaction>
</comment>
<comment type="cofactor">
    <cofactor evidence="5">
        <name>Fe(2+)</name>
        <dbReference type="ChEBI" id="CHEBI:29033"/>
    </cofactor>
    <text evidence="5">Binds 1 Fe(2+) ion.</text>
</comment>
<comment type="pathway">
    <text evidence="5">Xenobiotic degradation; gamma-hexachlorocyclohexane degradation.</text>
</comment>
<comment type="induction">
    <text evidence="2">By chlorohydroquinone, hydroquinone, and 2,5-dichlorohydroquinone.</text>
</comment>
<comment type="similarity">
    <text evidence="4">Belongs to the extradiol ring-cleavage dioxygenase family.</text>
</comment>
<reference key="1">
    <citation type="journal article" date="1999" name="J. Bacteriol.">
        <title>Cloning and sequencing of a novel meta-cleavage dioxygenase gene whose product is involved in degradation of gamma-hexachlorocyclohexane in Sphingomonas paucimobilis.</title>
        <authorList>
            <person name="Miyauchi K."/>
            <person name="Adachi Y."/>
            <person name="Nagata Y."/>
            <person name="Takagi M."/>
        </authorList>
    </citation>
    <scope>NUCLEOTIDE SEQUENCE [GENOMIC DNA]</scope>
    <scope>FUNCTION</scope>
    <scope>CATALYTIC ACTIVITY</scope>
    <scope>SUBSTRATE SPECIFICITY</scope>
    <scope>PATHWAY</scope>
    <scope>INDUCTION</scope>
    <scope>MUTAGENESIS OF HIS-162; HIS-229 AND GLU-278</scope>
    <source>
        <strain>DSM 16413 / CCM 7287 / MTCC 6362 / UT26 / NBRC 101211 / UT26S</strain>
    </source>
</reference>
<reference key="2">
    <citation type="journal article" date="2010" name="J. Bacteriol.">
        <title>Complete genome sequence of the representative gamma-hexachlorocyclohexane-degrading bacterium Sphingobium japonicum UT26.</title>
        <authorList>
            <person name="Nagata Y."/>
            <person name="Ohtsubo Y."/>
            <person name="Endo R."/>
            <person name="Ichikawa N."/>
            <person name="Ankai A."/>
            <person name="Oguchi A."/>
            <person name="Fukui S."/>
            <person name="Fujita N."/>
            <person name="Tsuda M."/>
        </authorList>
    </citation>
    <scope>NUCLEOTIDE SEQUENCE [LARGE SCALE GENOMIC DNA]</scope>
    <source>
        <strain>DSM 16413 / CCM 7287 / MTCC 6362 / UT26 / NBRC 101211 / UT26S</strain>
    </source>
</reference>
<evidence type="ECO:0000255" key="1">
    <source>
        <dbReference type="PROSITE-ProRule" id="PRU01163"/>
    </source>
</evidence>
<evidence type="ECO:0000269" key="2">
    <source>
    </source>
</evidence>
<evidence type="ECO:0000303" key="3">
    <source>
    </source>
</evidence>
<evidence type="ECO:0000305" key="4"/>
<evidence type="ECO:0000305" key="5">
    <source>
    </source>
</evidence>
<evidence type="ECO:0000312" key="6">
    <source>
        <dbReference type="EMBL" id="BAI99095.1"/>
    </source>
</evidence>
<evidence type="ECO:0000312" key="7">
    <source>
        <dbReference type="Proteomes" id="UP000007753"/>
    </source>
</evidence>
<gene>
    <name evidence="3" type="primary">linE</name>
    <name evidence="6" type="ordered locus">SJA_P1-01430</name>
</gene>
<protein>
    <recommendedName>
        <fullName evidence="5">Chlorohydroquinone/hydroquinone 1,2-dioxygenase</fullName>
        <ecNumber evidence="2">1.13.11.66</ecNumber>
    </recommendedName>
    <alternativeName>
        <fullName evidence="3">(Chloro)hydroquinone 1,2-dioxygenase</fullName>
        <shortName evidence="3">(C)HQ 1,2-dioxygenase</shortName>
    </alternativeName>
</protein>
<sequence length="321" mass="35958">MMQLPERVEGLHHITVATGSAQGDVDLLVKTLGQRLVKKTMFYDGARPVYHLYFGNELGEPGTLYTTFPVRQAGYTGKRGAGQISAVSYNAPVGTLSWWQEHLIKRAVTVSEVRERFGQKYLSFEHPDCGVGFEIIEQDTDGQFEPWDSPYVPKEVALRGFHSWTATLNRNEEMDSFMRNAWNLKPQGRDGNYQRYAFGNGGAAKVLDVYIDEDERPGTWALGEGQVHHAAFEVADLDVQAALKFDVEGLGYTDFSDRKHRGYFESIYVRTPGGVLFEASVTLGFTHDESPEKLGSEVKVAPQLEGVKDELLRTMNDPIVI</sequence>